<evidence type="ECO:0000255" key="1">
    <source>
        <dbReference type="HAMAP-Rule" id="MF_02068"/>
    </source>
</evidence>
<dbReference type="EC" id="2.7.7.40" evidence="1"/>
<dbReference type="EMBL" id="CP000920">
    <property type="protein sequence ID" value="ACO20908.1"/>
    <property type="molecule type" value="Genomic_DNA"/>
</dbReference>
<dbReference type="RefSeq" id="WP_000638502.1">
    <property type="nucleotide sequence ID" value="NC_012467.1"/>
</dbReference>
<dbReference type="SMR" id="C1CL05"/>
<dbReference type="KEGG" id="spp:SPP_1309"/>
<dbReference type="HOGENOM" id="CLU_061281_2_3_9"/>
<dbReference type="UniPathway" id="UPA00790"/>
<dbReference type="GO" id="GO:0050518">
    <property type="term" value="F:2-C-methyl-D-erythritol 4-phosphate cytidylyltransferase activity"/>
    <property type="evidence" value="ECO:0007669"/>
    <property type="project" value="TreeGrafter"/>
</dbReference>
<dbReference type="GO" id="GO:0047349">
    <property type="term" value="F:D-ribitol-5-phosphate cytidylyltransferase activity"/>
    <property type="evidence" value="ECO:0007669"/>
    <property type="project" value="UniProtKB-UniRule"/>
</dbReference>
<dbReference type="GO" id="GO:0071555">
    <property type="term" value="P:cell wall organization"/>
    <property type="evidence" value="ECO:0007669"/>
    <property type="project" value="UniProtKB-KW"/>
</dbReference>
<dbReference type="GO" id="GO:0008299">
    <property type="term" value="P:isoprenoid biosynthetic process"/>
    <property type="evidence" value="ECO:0007669"/>
    <property type="project" value="InterPro"/>
</dbReference>
<dbReference type="GO" id="GO:1902012">
    <property type="term" value="P:poly(ribitol phosphate) teichoic acid biosynthetic process"/>
    <property type="evidence" value="ECO:0007669"/>
    <property type="project" value="UniProtKB-UniRule"/>
</dbReference>
<dbReference type="CDD" id="cd02516">
    <property type="entry name" value="CDP-ME_synthetase"/>
    <property type="match status" value="1"/>
</dbReference>
<dbReference type="FunFam" id="3.90.550.10:FF:000003">
    <property type="entry name" value="2-C-methyl-D-erythritol 4-phosphate cytidylyltransferase"/>
    <property type="match status" value="1"/>
</dbReference>
<dbReference type="Gene3D" id="3.90.550.10">
    <property type="entry name" value="Spore Coat Polysaccharide Biosynthesis Protein SpsA, Chain A"/>
    <property type="match status" value="1"/>
</dbReference>
<dbReference type="HAMAP" id="MF_02068">
    <property type="entry name" value="TarI"/>
    <property type="match status" value="1"/>
</dbReference>
<dbReference type="InterPro" id="IPR034683">
    <property type="entry name" value="IspD/TarI"/>
</dbReference>
<dbReference type="InterPro" id="IPR050088">
    <property type="entry name" value="IspD/TarI_cytidylyltransf_bact"/>
</dbReference>
<dbReference type="InterPro" id="IPR018294">
    <property type="entry name" value="ISPD_synthase_CS"/>
</dbReference>
<dbReference type="InterPro" id="IPR029044">
    <property type="entry name" value="Nucleotide-diphossugar_trans"/>
</dbReference>
<dbReference type="InterPro" id="IPR034709">
    <property type="entry name" value="TarI"/>
</dbReference>
<dbReference type="NCBIfam" id="NF001183">
    <property type="entry name" value="PRK00155.1-3"/>
    <property type="match status" value="1"/>
</dbReference>
<dbReference type="PANTHER" id="PTHR32125">
    <property type="entry name" value="2-C-METHYL-D-ERYTHRITOL 4-PHOSPHATE CYTIDYLYLTRANSFERASE, CHLOROPLASTIC"/>
    <property type="match status" value="1"/>
</dbReference>
<dbReference type="PANTHER" id="PTHR32125:SF8">
    <property type="entry name" value="RIBITOL-5-PHOSPHATE CYTIDYLYLTRANSFERASE"/>
    <property type="match status" value="1"/>
</dbReference>
<dbReference type="Pfam" id="PF01128">
    <property type="entry name" value="IspD"/>
    <property type="match status" value="1"/>
</dbReference>
<dbReference type="SUPFAM" id="SSF53448">
    <property type="entry name" value="Nucleotide-diphospho-sugar transferases"/>
    <property type="match status" value="1"/>
</dbReference>
<dbReference type="PROSITE" id="PS01295">
    <property type="entry name" value="ISPD"/>
    <property type="match status" value="1"/>
</dbReference>
<keyword id="KW-0961">Cell wall biogenesis/degradation</keyword>
<keyword id="KW-0548">Nucleotidyltransferase</keyword>
<keyword id="KW-0777">Teichoic acid biosynthesis</keyword>
<keyword id="KW-0808">Transferase</keyword>
<accession>C1CL05</accession>
<reference key="1">
    <citation type="journal article" date="2010" name="Genome Biol.">
        <title>Structure and dynamics of the pan-genome of Streptococcus pneumoniae and closely related species.</title>
        <authorList>
            <person name="Donati C."/>
            <person name="Hiller N.L."/>
            <person name="Tettelin H."/>
            <person name="Muzzi A."/>
            <person name="Croucher N.J."/>
            <person name="Angiuoli S.V."/>
            <person name="Oggioni M."/>
            <person name="Dunning Hotopp J.C."/>
            <person name="Hu F.Z."/>
            <person name="Riley D.R."/>
            <person name="Covacci A."/>
            <person name="Mitchell T.J."/>
            <person name="Bentley S.D."/>
            <person name="Kilian M."/>
            <person name="Ehrlich G.D."/>
            <person name="Rappuoli R."/>
            <person name="Moxon E.R."/>
            <person name="Masignani V."/>
        </authorList>
    </citation>
    <scope>NUCLEOTIDE SEQUENCE [LARGE SCALE GENOMIC DNA]</scope>
    <source>
        <strain>P1031</strain>
    </source>
</reference>
<comment type="function">
    <text evidence="1">Catalyzes the transfer of the cytidylyl group of CTP to D-ribitol 5-phosphate.</text>
</comment>
<comment type="catalytic activity">
    <reaction evidence="1">
        <text>D-ribitol 5-phosphate + CTP + H(+) = CDP-L-ribitol + diphosphate</text>
        <dbReference type="Rhea" id="RHEA:12456"/>
        <dbReference type="ChEBI" id="CHEBI:15378"/>
        <dbReference type="ChEBI" id="CHEBI:33019"/>
        <dbReference type="ChEBI" id="CHEBI:37563"/>
        <dbReference type="ChEBI" id="CHEBI:57608"/>
        <dbReference type="ChEBI" id="CHEBI:57695"/>
        <dbReference type="EC" id="2.7.7.40"/>
    </reaction>
</comment>
<comment type="pathway">
    <text evidence="1">Cell wall biogenesis; poly(ribitol phosphate) teichoic acid biosynthesis.</text>
</comment>
<comment type="similarity">
    <text evidence="1">Belongs to the IspD/TarI cytidylyltransferase family. TarI subfamily.</text>
</comment>
<sequence length="235" mass="26256">MIYAGILAGGTGTRMGISNLPKQFLELGDRPILIHTIEKFVLEPSIEKIVVGVHGDWVSHAEDLVDKYLPLYKERIIITKGGADRNTSIKKIIEAIDAYRPLTPEDIVVTHDSVRPFITLRMIQDNIQLAQNHDAVDTVVEAVDTIVESTNGQFITDIPNRAHLYQGQTPQTFRCKDFMDLYGSLSDEEKEILTDACKIFVIKGKDVALAKGEYSNLKITTVTDLKIAKSMIEKD</sequence>
<organism>
    <name type="scientific">Streptococcus pneumoniae (strain P1031)</name>
    <dbReference type="NCBI Taxonomy" id="488223"/>
    <lineage>
        <taxon>Bacteria</taxon>
        <taxon>Bacillati</taxon>
        <taxon>Bacillota</taxon>
        <taxon>Bacilli</taxon>
        <taxon>Lactobacillales</taxon>
        <taxon>Streptococcaceae</taxon>
        <taxon>Streptococcus</taxon>
    </lineage>
</organism>
<gene>
    <name evidence="1" type="primary">tarI</name>
    <name type="ordered locus">SPP_1309</name>
</gene>
<protein>
    <recommendedName>
        <fullName evidence="1">Ribitol-5-phosphate cytidylyltransferase</fullName>
        <ecNumber evidence="1">2.7.7.40</ecNumber>
    </recommendedName>
</protein>
<feature type="chain" id="PRO_1000191074" description="Ribitol-5-phosphate cytidylyltransferase">
    <location>
        <begin position="1"/>
        <end position="235"/>
    </location>
</feature>
<feature type="binding site" evidence="1">
    <location>
        <begin position="7"/>
        <end position="10"/>
    </location>
    <ligand>
        <name>CTP</name>
        <dbReference type="ChEBI" id="CHEBI:37563"/>
    </ligand>
</feature>
<feature type="binding site" evidence="1">
    <location>
        <begin position="82"/>
        <end position="88"/>
    </location>
    <ligand>
        <name>CTP</name>
        <dbReference type="ChEBI" id="CHEBI:37563"/>
    </ligand>
</feature>
<feature type="binding site" evidence="1">
    <location>
        <position position="113"/>
    </location>
    <ligand>
        <name>CTP</name>
        <dbReference type="ChEBI" id="CHEBI:37563"/>
    </ligand>
</feature>
<feature type="site" description="Transition state stabilizer" evidence="1">
    <location>
        <position position="14"/>
    </location>
</feature>
<feature type="site" description="Transition state stabilizer" evidence="1">
    <location>
        <position position="22"/>
    </location>
</feature>
<feature type="site" description="Positions ribitol 5-phosphate for the nucleophilic attack" evidence="1">
    <location>
        <position position="161"/>
    </location>
</feature>
<feature type="site" description="Positions ribitol 5-phosphate for the nucleophilic attack" evidence="1">
    <location>
        <position position="218"/>
    </location>
</feature>
<proteinExistence type="inferred from homology"/>
<name>TARI_STRZP</name>